<sequence>MARMNRPAPVEVTYKNMRFLITHNPTNATLNKFIEELKKYGVTTIVRVCEATYDTTLVEKEGIHVLDWPFDDGAPPSNQIVDDWLSLVKIKFREEPGCCIAVHCVAGLGRAPVLVALALIEGGMKYEDAVQFIRQKRRGAFNSKQLLYLEKYRPKMRLRFKDSNGHRNNCCIQ</sequence>
<reference key="1">
    <citation type="submission" date="1997-01" db="EMBL/GenBank/DDBJ databases">
        <authorList>
            <person name="Oh B."/>
            <person name="Hwang S.-Y."/>
            <person name="Knowles B.B."/>
        </authorList>
    </citation>
    <scope>NUCLEOTIDE SEQUENCE [MRNA]</scope>
</reference>
<reference key="2">
    <citation type="journal article" date="2005" name="Science">
        <title>The transcriptional landscape of the mammalian genome.</title>
        <authorList>
            <person name="Carninci P."/>
            <person name="Kasukawa T."/>
            <person name="Katayama S."/>
            <person name="Gough J."/>
            <person name="Frith M.C."/>
            <person name="Maeda N."/>
            <person name="Oyama R."/>
            <person name="Ravasi T."/>
            <person name="Lenhard B."/>
            <person name="Wells C."/>
            <person name="Kodzius R."/>
            <person name="Shimokawa K."/>
            <person name="Bajic V.B."/>
            <person name="Brenner S.E."/>
            <person name="Batalov S."/>
            <person name="Forrest A.R."/>
            <person name="Zavolan M."/>
            <person name="Davis M.J."/>
            <person name="Wilming L.G."/>
            <person name="Aidinis V."/>
            <person name="Allen J.E."/>
            <person name="Ambesi-Impiombato A."/>
            <person name="Apweiler R."/>
            <person name="Aturaliya R.N."/>
            <person name="Bailey T.L."/>
            <person name="Bansal M."/>
            <person name="Baxter L."/>
            <person name="Beisel K.W."/>
            <person name="Bersano T."/>
            <person name="Bono H."/>
            <person name="Chalk A.M."/>
            <person name="Chiu K.P."/>
            <person name="Choudhary V."/>
            <person name="Christoffels A."/>
            <person name="Clutterbuck D.R."/>
            <person name="Crowe M.L."/>
            <person name="Dalla E."/>
            <person name="Dalrymple B.P."/>
            <person name="de Bono B."/>
            <person name="Della Gatta G."/>
            <person name="di Bernardo D."/>
            <person name="Down T."/>
            <person name="Engstrom P."/>
            <person name="Fagiolini M."/>
            <person name="Faulkner G."/>
            <person name="Fletcher C.F."/>
            <person name="Fukushima T."/>
            <person name="Furuno M."/>
            <person name="Futaki S."/>
            <person name="Gariboldi M."/>
            <person name="Georgii-Hemming P."/>
            <person name="Gingeras T.R."/>
            <person name="Gojobori T."/>
            <person name="Green R.E."/>
            <person name="Gustincich S."/>
            <person name="Harbers M."/>
            <person name="Hayashi Y."/>
            <person name="Hensch T.K."/>
            <person name="Hirokawa N."/>
            <person name="Hill D."/>
            <person name="Huminiecki L."/>
            <person name="Iacono M."/>
            <person name="Ikeo K."/>
            <person name="Iwama A."/>
            <person name="Ishikawa T."/>
            <person name="Jakt M."/>
            <person name="Kanapin A."/>
            <person name="Katoh M."/>
            <person name="Kawasawa Y."/>
            <person name="Kelso J."/>
            <person name="Kitamura H."/>
            <person name="Kitano H."/>
            <person name="Kollias G."/>
            <person name="Krishnan S.P."/>
            <person name="Kruger A."/>
            <person name="Kummerfeld S.K."/>
            <person name="Kurochkin I.V."/>
            <person name="Lareau L.F."/>
            <person name="Lazarevic D."/>
            <person name="Lipovich L."/>
            <person name="Liu J."/>
            <person name="Liuni S."/>
            <person name="McWilliam S."/>
            <person name="Madan Babu M."/>
            <person name="Madera M."/>
            <person name="Marchionni L."/>
            <person name="Matsuda H."/>
            <person name="Matsuzawa S."/>
            <person name="Miki H."/>
            <person name="Mignone F."/>
            <person name="Miyake S."/>
            <person name="Morris K."/>
            <person name="Mottagui-Tabar S."/>
            <person name="Mulder N."/>
            <person name="Nakano N."/>
            <person name="Nakauchi H."/>
            <person name="Ng P."/>
            <person name="Nilsson R."/>
            <person name="Nishiguchi S."/>
            <person name="Nishikawa S."/>
            <person name="Nori F."/>
            <person name="Ohara O."/>
            <person name="Okazaki Y."/>
            <person name="Orlando V."/>
            <person name="Pang K.C."/>
            <person name="Pavan W.J."/>
            <person name="Pavesi G."/>
            <person name="Pesole G."/>
            <person name="Petrovsky N."/>
            <person name="Piazza S."/>
            <person name="Reed J."/>
            <person name="Reid J.F."/>
            <person name="Ring B.Z."/>
            <person name="Ringwald M."/>
            <person name="Rost B."/>
            <person name="Ruan Y."/>
            <person name="Salzberg S.L."/>
            <person name="Sandelin A."/>
            <person name="Schneider C."/>
            <person name="Schoenbach C."/>
            <person name="Sekiguchi K."/>
            <person name="Semple C.A."/>
            <person name="Seno S."/>
            <person name="Sessa L."/>
            <person name="Sheng Y."/>
            <person name="Shibata Y."/>
            <person name="Shimada H."/>
            <person name="Shimada K."/>
            <person name="Silva D."/>
            <person name="Sinclair B."/>
            <person name="Sperling S."/>
            <person name="Stupka E."/>
            <person name="Sugiura K."/>
            <person name="Sultana R."/>
            <person name="Takenaka Y."/>
            <person name="Taki K."/>
            <person name="Tammoja K."/>
            <person name="Tan S.L."/>
            <person name="Tang S."/>
            <person name="Taylor M.S."/>
            <person name="Tegner J."/>
            <person name="Teichmann S.A."/>
            <person name="Ueda H.R."/>
            <person name="van Nimwegen E."/>
            <person name="Verardo R."/>
            <person name="Wei C.L."/>
            <person name="Yagi K."/>
            <person name="Yamanishi H."/>
            <person name="Zabarovsky E."/>
            <person name="Zhu S."/>
            <person name="Zimmer A."/>
            <person name="Hide W."/>
            <person name="Bult C."/>
            <person name="Grimmond S.M."/>
            <person name="Teasdale R.D."/>
            <person name="Liu E.T."/>
            <person name="Brusic V."/>
            <person name="Quackenbush J."/>
            <person name="Wahlestedt C."/>
            <person name="Mattick J.S."/>
            <person name="Hume D.A."/>
            <person name="Kai C."/>
            <person name="Sasaki D."/>
            <person name="Tomaru Y."/>
            <person name="Fukuda S."/>
            <person name="Kanamori-Katayama M."/>
            <person name="Suzuki M."/>
            <person name="Aoki J."/>
            <person name="Arakawa T."/>
            <person name="Iida J."/>
            <person name="Imamura K."/>
            <person name="Itoh M."/>
            <person name="Kato T."/>
            <person name="Kawaji H."/>
            <person name="Kawagashira N."/>
            <person name="Kawashima T."/>
            <person name="Kojima M."/>
            <person name="Kondo S."/>
            <person name="Konno H."/>
            <person name="Nakano K."/>
            <person name="Ninomiya N."/>
            <person name="Nishio T."/>
            <person name="Okada M."/>
            <person name="Plessy C."/>
            <person name="Shibata K."/>
            <person name="Shiraki T."/>
            <person name="Suzuki S."/>
            <person name="Tagami M."/>
            <person name="Waki K."/>
            <person name="Watahiki A."/>
            <person name="Okamura-Oho Y."/>
            <person name="Suzuki H."/>
            <person name="Kawai J."/>
            <person name="Hayashizaki Y."/>
        </authorList>
    </citation>
    <scope>NUCLEOTIDE SEQUENCE [LARGE SCALE MRNA]</scope>
    <source>
        <strain>C57BL/6J</strain>
        <tissue>Bone marrow</tissue>
        <tissue>Head</tissue>
    </source>
</reference>
<reference key="3">
    <citation type="journal article" date="2004" name="Genome Res.">
        <title>The status, quality, and expansion of the NIH full-length cDNA project: the Mammalian Gene Collection (MGC).</title>
        <authorList>
            <consortium name="The MGC Project Team"/>
        </authorList>
    </citation>
    <scope>NUCLEOTIDE SEQUENCE [LARGE SCALE MRNA]</scope>
    <source>
        <strain>FVB/N</strain>
        <tissue>Colon</tissue>
        <tissue>Eye</tissue>
    </source>
</reference>
<reference key="4">
    <citation type="journal article" date="1999" name="J. Exp. Zool.">
        <title>Developmental expression of the murine Prl-1 protein tyrosine phosphatase gene.</title>
        <authorList>
            <person name="Rundle C.H."/>
            <person name="Kappen C."/>
        </authorList>
    </citation>
    <scope>NUCLEOTIDE SEQUENCE [MRNA] OF 1-23</scope>
    <scope>DEVELOPMENTAL STAGE</scope>
</reference>
<reference key="5">
    <citation type="journal article" date="2000" name="J. Biol. Chem.">
        <title>Prenylation-dependent association of protein-tyrosine phosphatases PRL-1, -2, and -3 with the plasma membrane and the early endosome.</title>
        <authorList>
            <person name="Zeng Q."/>
            <person name="Si X."/>
            <person name="Horstmann H."/>
            <person name="Xu Y."/>
            <person name="Hong W."/>
            <person name="Pallen C.J."/>
        </authorList>
    </citation>
    <scope>ISOPRENYLATION AT CYS-170</scope>
    <scope>SUBCELLULAR LOCATION</scope>
</reference>
<reference key="6">
    <citation type="journal article" date="2001" name="J. Biol. Chem.">
        <title>ATF-7, a novel bZIP protein, interacts with the PRL-1 protein-tyrosine phosphatase.</title>
        <authorList>
            <person name="Peters C.S."/>
            <person name="Liang X."/>
            <person name="Li S."/>
            <person name="Kannan S."/>
            <person name="Peng Y."/>
            <person name="Taub R."/>
            <person name="Diamond R.H."/>
        </authorList>
    </citation>
    <scope>INTERACTION WITH ATF5</scope>
    <scope>MUTAGENESIS OF CYS-104</scope>
</reference>
<reference key="7">
    <citation type="journal article" date="2010" name="Cell">
        <title>A tissue-specific atlas of mouse protein phosphorylation and expression.</title>
        <authorList>
            <person name="Huttlin E.L."/>
            <person name="Jedrychowski M.P."/>
            <person name="Elias J.E."/>
            <person name="Goswami T."/>
            <person name="Rad R."/>
            <person name="Beausoleil S.A."/>
            <person name="Villen J."/>
            <person name="Haas W."/>
            <person name="Sowa M.E."/>
            <person name="Gygi S.P."/>
        </authorList>
    </citation>
    <scope>IDENTIFICATION BY MASS SPECTROMETRY [LARGE SCALE ANALYSIS]</scope>
    <source>
        <tissue>Brain</tissue>
        <tissue>Brown adipose tissue</tissue>
        <tissue>Kidney</tissue>
        <tissue>Liver</tissue>
        <tissue>Lung</tissue>
        <tissue>Pancreas</tissue>
        <tissue>Spleen</tissue>
        <tissue>Testis</tissue>
    </source>
</reference>
<comment type="function">
    <text evidence="1">Protein tyrosine phosphatase which stimulates progression from G1 into S phase during mitosis. May play a role in the development and maintenance of differentiating epithelial tissues (By similarity).</text>
</comment>
<comment type="catalytic activity">
    <reaction evidence="3">
        <text>O-phospho-L-tyrosyl-[protein] + H2O = L-tyrosyl-[protein] + phosphate</text>
        <dbReference type="Rhea" id="RHEA:10684"/>
        <dbReference type="Rhea" id="RHEA-COMP:10136"/>
        <dbReference type="Rhea" id="RHEA-COMP:20101"/>
        <dbReference type="ChEBI" id="CHEBI:15377"/>
        <dbReference type="ChEBI" id="CHEBI:43474"/>
        <dbReference type="ChEBI" id="CHEBI:46858"/>
        <dbReference type="ChEBI" id="CHEBI:61978"/>
        <dbReference type="EC" id="3.1.3.48"/>
    </reaction>
</comment>
<comment type="activity regulation">
    <text evidence="1">Inhibited by sodium orthovanadate and pentamidine.</text>
</comment>
<comment type="subunit">
    <text evidence="1 7">Homotrimer. Interacts with tubulin (By similarity). Interacts with ATF5.</text>
</comment>
<comment type="subcellular location">
    <subcellularLocation>
        <location evidence="6">Cell membrane</location>
        <topology evidence="6">Lipid-anchor</topology>
    </subcellularLocation>
    <subcellularLocation>
        <location evidence="6">Early endosome</location>
    </subcellularLocation>
    <subcellularLocation>
        <location evidence="6">Endoplasmic reticulum</location>
    </subcellularLocation>
    <subcellularLocation>
        <location evidence="6">Cytoplasm</location>
    </subcellularLocation>
    <subcellularLocation>
        <location evidence="6">Cytoplasm</location>
        <location evidence="6">Cytoskeleton</location>
        <location evidence="6">Spindle</location>
    </subcellularLocation>
    <subcellularLocation>
        <location evidence="2">Nucleus</location>
    </subcellularLocation>
    <text>And mitotic spindle.</text>
</comment>
<comment type="developmental stage">
    <text evidence="5">Expressed in all tissues except heart and skeletal muscle, from 10.5 dpc to 18.5 dpc.</text>
</comment>
<comment type="PTM">
    <text>Farnesylated. Farnesylation is required for membrane targeting. Unfarnesylated forms are shifted into the nucleus.</text>
</comment>
<comment type="similarity">
    <text evidence="8">Belongs to the protein-tyrosine phosphatase family.</text>
</comment>
<feature type="chain" id="PRO_0000094782" description="Protein tyrosine phosphatase type IVA 1">
    <location>
        <begin position="1"/>
        <end position="170"/>
    </location>
</feature>
<feature type="propeptide" id="PRO_0000396728" description="Removed in mature form" evidence="8">
    <location>
        <begin position="171"/>
        <end position="173"/>
    </location>
</feature>
<feature type="domain" description="Tyrosine-protein phosphatase" evidence="4">
    <location>
        <begin position="8"/>
        <end position="161"/>
    </location>
</feature>
<feature type="region of interest" description="Interaction with ATF5" evidence="7">
    <location>
        <begin position="97"/>
        <end position="132"/>
    </location>
</feature>
<feature type="active site" description="Proton donor" evidence="1">
    <location>
        <position position="72"/>
    </location>
</feature>
<feature type="active site" description="Phosphocysteine intermediate" evidence="4">
    <location>
        <position position="104"/>
    </location>
</feature>
<feature type="binding site" evidence="1">
    <location>
        <begin position="105"/>
        <end position="110"/>
    </location>
    <ligand>
        <name>phosphate</name>
        <dbReference type="ChEBI" id="CHEBI:43474"/>
    </ligand>
</feature>
<feature type="binding site" evidence="1">
    <location>
        <position position="110"/>
    </location>
    <ligand>
        <name>substrate</name>
    </ligand>
</feature>
<feature type="modified residue" description="Cysteine methyl ester" evidence="8">
    <location>
        <position position="170"/>
    </location>
</feature>
<feature type="lipid moiety-binding region" description="S-farnesyl cysteine" evidence="6">
    <location>
        <position position="170"/>
    </location>
</feature>
<feature type="disulfide bond" evidence="1">
    <location>
        <begin position="49"/>
        <end position="104"/>
    </location>
</feature>
<feature type="mutagenesis site" description="Abolishes activity." evidence="7">
    <original>C</original>
    <variation>S</variation>
    <location>
        <position position="104"/>
    </location>
</feature>
<feature type="strand" evidence="10">
    <location>
        <begin position="10"/>
        <end position="14"/>
    </location>
</feature>
<feature type="strand" evidence="10">
    <location>
        <begin position="17"/>
        <end position="22"/>
    </location>
</feature>
<feature type="strand" evidence="10">
    <location>
        <begin position="27"/>
        <end position="29"/>
    </location>
</feature>
<feature type="helix" evidence="10">
    <location>
        <begin position="30"/>
        <end position="40"/>
    </location>
</feature>
<feature type="strand" evidence="10">
    <location>
        <begin position="42"/>
        <end position="47"/>
    </location>
</feature>
<feature type="helix" evidence="10">
    <location>
        <begin position="56"/>
        <end position="60"/>
    </location>
</feature>
<feature type="strand" evidence="10">
    <location>
        <begin position="64"/>
        <end position="67"/>
    </location>
</feature>
<feature type="helix" evidence="10">
    <location>
        <begin position="78"/>
        <end position="94"/>
    </location>
</feature>
<feature type="strand" evidence="10">
    <location>
        <begin position="99"/>
        <end position="103"/>
    </location>
</feature>
<feature type="strand" evidence="11">
    <location>
        <begin position="105"/>
        <end position="109"/>
    </location>
</feature>
<feature type="helix" evidence="10">
    <location>
        <begin position="110"/>
        <end position="121"/>
    </location>
</feature>
<feature type="helix" evidence="10">
    <location>
        <begin position="126"/>
        <end position="136"/>
    </location>
</feature>
<feature type="strand" evidence="9">
    <location>
        <begin position="137"/>
        <end position="139"/>
    </location>
</feature>
<feature type="helix" evidence="10">
    <location>
        <begin position="143"/>
        <end position="151"/>
    </location>
</feature>
<protein>
    <recommendedName>
        <fullName>Protein tyrosine phosphatase type IVA 1</fullName>
        <ecNumber evidence="3">3.1.3.48</ecNumber>
    </recommendedName>
    <alternativeName>
        <fullName>Protein-tyrosine phosphatase 4a1</fullName>
    </alternativeName>
    <alternativeName>
        <fullName>Protein-tyrosine phosphatase of regenerating liver 1</fullName>
        <shortName>PRL-1</shortName>
    </alternativeName>
</protein>
<organism>
    <name type="scientific">Mus musculus</name>
    <name type="common">Mouse</name>
    <dbReference type="NCBI Taxonomy" id="10090"/>
    <lineage>
        <taxon>Eukaryota</taxon>
        <taxon>Metazoa</taxon>
        <taxon>Chordata</taxon>
        <taxon>Craniata</taxon>
        <taxon>Vertebrata</taxon>
        <taxon>Euteleostomi</taxon>
        <taxon>Mammalia</taxon>
        <taxon>Eutheria</taxon>
        <taxon>Euarchontoglires</taxon>
        <taxon>Glires</taxon>
        <taxon>Rodentia</taxon>
        <taxon>Myomorpha</taxon>
        <taxon>Muroidea</taxon>
        <taxon>Muridae</taxon>
        <taxon>Murinae</taxon>
        <taxon>Mus</taxon>
        <taxon>Mus</taxon>
    </lineage>
</organism>
<accession>Q63739</accession>
<accession>O09097</accession>
<accession>O09154</accession>
<accession>Q3UFU9</accession>
<evidence type="ECO:0000250" key="1"/>
<evidence type="ECO:0000250" key="2">
    <source>
        <dbReference type="UniProtKB" id="Q78EG7"/>
    </source>
</evidence>
<evidence type="ECO:0000250" key="3">
    <source>
        <dbReference type="UniProtKB" id="Q93096"/>
    </source>
</evidence>
<evidence type="ECO:0000255" key="4">
    <source>
        <dbReference type="PROSITE-ProRule" id="PRU00160"/>
    </source>
</evidence>
<evidence type="ECO:0000269" key="5">
    <source>
    </source>
</evidence>
<evidence type="ECO:0000269" key="6">
    <source>
    </source>
</evidence>
<evidence type="ECO:0000269" key="7">
    <source>
    </source>
</evidence>
<evidence type="ECO:0000305" key="8"/>
<evidence type="ECO:0007829" key="9">
    <source>
        <dbReference type="PDB" id="5LXQ"/>
    </source>
</evidence>
<evidence type="ECO:0007829" key="10">
    <source>
        <dbReference type="PDB" id="5MMZ"/>
    </source>
</evidence>
<evidence type="ECO:0007829" key="11">
    <source>
        <dbReference type="PDB" id="6WUS"/>
    </source>
</evidence>
<proteinExistence type="evidence at protein level"/>
<dbReference type="EC" id="3.1.3.48" evidence="3"/>
<dbReference type="EMBL" id="U84411">
    <property type="protein sequence ID" value="AAB58913.1"/>
    <property type="molecule type" value="mRNA"/>
</dbReference>
<dbReference type="EMBL" id="AK081491">
    <property type="protein sequence ID" value="BAC38233.1"/>
    <property type="molecule type" value="mRNA"/>
</dbReference>
<dbReference type="EMBL" id="AK148288">
    <property type="protein sequence ID" value="BAE28460.1"/>
    <property type="molecule type" value="mRNA"/>
</dbReference>
<dbReference type="EMBL" id="AK150506">
    <property type="protein sequence ID" value="BAE29619.1"/>
    <property type="molecule type" value="mRNA"/>
</dbReference>
<dbReference type="EMBL" id="AK151533">
    <property type="protein sequence ID" value="BAE30480.1"/>
    <property type="molecule type" value="mRNA"/>
</dbReference>
<dbReference type="EMBL" id="BC055039">
    <property type="protein sequence ID" value="AAH55039.1"/>
    <property type="molecule type" value="mRNA"/>
</dbReference>
<dbReference type="EMBL" id="BC086787">
    <property type="protein sequence ID" value="AAH86787.1"/>
    <property type="molecule type" value="mRNA"/>
</dbReference>
<dbReference type="EMBL" id="BC094447">
    <property type="protein sequence ID" value="AAH94447.1"/>
    <property type="molecule type" value="mRNA"/>
</dbReference>
<dbReference type="EMBL" id="AF064943">
    <property type="status" value="NOT_ANNOTATED_CDS"/>
    <property type="molecule type" value="mRNA"/>
</dbReference>
<dbReference type="CCDS" id="CCDS14858.1"/>
<dbReference type="RefSeq" id="NP_001407715.1">
    <property type="nucleotide sequence ID" value="NM_001420786.1"/>
</dbReference>
<dbReference type="RefSeq" id="NP_001407716.1">
    <property type="nucleotide sequence ID" value="NM_001420787.1"/>
</dbReference>
<dbReference type="RefSeq" id="NP_001407717.1">
    <property type="nucleotide sequence ID" value="NM_001420788.1"/>
</dbReference>
<dbReference type="RefSeq" id="NP_035330.1">
    <property type="nucleotide sequence ID" value="NM_011200.3"/>
</dbReference>
<dbReference type="RefSeq" id="XP_006495861.1">
    <property type="nucleotide sequence ID" value="XM_006495798.3"/>
</dbReference>
<dbReference type="RefSeq" id="XP_006495862.1">
    <property type="nucleotide sequence ID" value="XM_006495799.2"/>
</dbReference>
<dbReference type="PDB" id="5LXQ">
    <property type="method" value="X-ray"/>
    <property type="resolution" value="3.33 A"/>
    <property type="chains" value="B/C=1-173"/>
</dbReference>
<dbReference type="PDB" id="5MMZ">
    <property type="method" value="X-ray"/>
    <property type="resolution" value="2.40 A"/>
    <property type="chains" value="B=1-173"/>
</dbReference>
<dbReference type="PDB" id="6WUS">
    <property type="method" value="X-ray"/>
    <property type="resolution" value="2.76 A"/>
    <property type="chains" value="B=7-160"/>
</dbReference>
<dbReference type="PDBsum" id="5LXQ"/>
<dbReference type="PDBsum" id="5MMZ"/>
<dbReference type="PDBsum" id="6WUS"/>
<dbReference type="BMRB" id="Q63739"/>
<dbReference type="SASBDB" id="Q63739"/>
<dbReference type="SMR" id="Q63739"/>
<dbReference type="BioGRID" id="202473">
    <property type="interactions" value="6"/>
</dbReference>
<dbReference type="FunCoup" id="Q63739">
    <property type="interactions" value="2467"/>
</dbReference>
<dbReference type="STRING" id="10090.ENSMUSP00000027232"/>
<dbReference type="GlyGen" id="Q63739">
    <property type="glycosylation" value="1 site, 1 N-linked glycan (1 site)"/>
</dbReference>
<dbReference type="iPTMnet" id="Q63739"/>
<dbReference type="PhosphoSitePlus" id="Q63739"/>
<dbReference type="PaxDb" id="10090-ENSMUSP00000027232"/>
<dbReference type="ProteomicsDB" id="258957"/>
<dbReference type="Pumba" id="Q63739"/>
<dbReference type="DNASU" id="19243"/>
<dbReference type="Ensembl" id="ENSMUST00000027232.15">
    <property type="protein sequence ID" value="ENSMUSP00000027232.8"/>
    <property type="gene ID" value="ENSMUSG00000117310.3"/>
</dbReference>
<dbReference type="Ensembl" id="ENSMUST00000232841.2">
    <property type="protein sequence ID" value="ENSMUSP00000156862.2"/>
    <property type="gene ID" value="ENSMUSG00000026064.17"/>
</dbReference>
<dbReference type="GeneID" id="19243"/>
<dbReference type="KEGG" id="mmu:19243"/>
<dbReference type="UCSC" id="uc007anh.1">
    <property type="organism name" value="mouse"/>
</dbReference>
<dbReference type="AGR" id="MGI:1277096"/>
<dbReference type="CTD" id="7803"/>
<dbReference type="MGI" id="MGI:1277096">
    <property type="gene designation" value="Ptp4a1"/>
</dbReference>
<dbReference type="VEuPathDB" id="HostDB:ENSMUSG00000026064"/>
<dbReference type="VEuPathDB" id="HostDB:ENSMUSG00000117310"/>
<dbReference type="eggNOG" id="KOG2836">
    <property type="taxonomic scope" value="Eukaryota"/>
</dbReference>
<dbReference type="GeneTree" id="ENSGT00940000154406"/>
<dbReference type="HOGENOM" id="CLU_099263_1_0_1"/>
<dbReference type="InParanoid" id="Q63739"/>
<dbReference type="OMA" id="CVIDEWL"/>
<dbReference type="OrthoDB" id="5632at2759"/>
<dbReference type="PhylomeDB" id="Q63739"/>
<dbReference type="TreeFam" id="TF313384"/>
<dbReference type="BioGRID-ORCS" id="19243">
    <property type="hits" value="7 hits in 58 CRISPR screens"/>
</dbReference>
<dbReference type="ChiTaRS" id="Ptp4a1">
    <property type="organism name" value="mouse"/>
</dbReference>
<dbReference type="PRO" id="PR:Q63739"/>
<dbReference type="Proteomes" id="UP000000589">
    <property type="component" value="Chromosome 1"/>
</dbReference>
<dbReference type="RNAct" id="Q63739">
    <property type="molecule type" value="protein"/>
</dbReference>
<dbReference type="Bgee" id="ENSMUSG00000026064">
    <property type="expression patterns" value="Expressed in granulocyte and 79 other cell types or tissues"/>
</dbReference>
<dbReference type="ExpressionAtlas" id="Q63739">
    <property type="expression patterns" value="baseline and differential"/>
</dbReference>
<dbReference type="GO" id="GO:0005769">
    <property type="term" value="C:early endosome"/>
    <property type="evidence" value="ECO:0007669"/>
    <property type="project" value="UniProtKB-SubCell"/>
</dbReference>
<dbReference type="GO" id="GO:0005783">
    <property type="term" value="C:endoplasmic reticulum"/>
    <property type="evidence" value="ECO:0007669"/>
    <property type="project" value="UniProtKB-SubCell"/>
</dbReference>
<dbReference type="GO" id="GO:0005768">
    <property type="term" value="C:endosome"/>
    <property type="evidence" value="ECO:0000304"/>
    <property type="project" value="UniProtKB"/>
</dbReference>
<dbReference type="GO" id="GO:0005634">
    <property type="term" value="C:nucleus"/>
    <property type="evidence" value="ECO:0007669"/>
    <property type="project" value="UniProtKB-SubCell"/>
</dbReference>
<dbReference type="GO" id="GO:0005886">
    <property type="term" value="C:plasma membrane"/>
    <property type="evidence" value="ECO:0000304"/>
    <property type="project" value="UniProtKB"/>
</dbReference>
<dbReference type="GO" id="GO:0005819">
    <property type="term" value="C:spindle"/>
    <property type="evidence" value="ECO:0007669"/>
    <property type="project" value="UniProtKB-SubCell"/>
</dbReference>
<dbReference type="GO" id="GO:0004725">
    <property type="term" value="F:protein tyrosine phosphatase activity"/>
    <property type="evidence" value="ECO:0000304"/>
    <property type="project" value="UniProtKB"/>
</dbReference>
<dbReference type="GO" id="GO:0030335">
    <property type="term" value="P:positive regulation of cell migration"/>
    <property type="evidence" value="ECO:0000314"/>
    <property type="project" value="UniProtKB"/>
</dbReference>
<dbReference type="CDD" id="cd18537">
    <property type="entry name" value="PTP-IVa1"/>
    <property type="match status" value="1"/>
</dbReference>
<dbReference type="FunFam" id="3.90.190.10:FF:000012">
    <property type="entry name" value="protein tyrosine phosphatase type IVA 1"/>
    <property type="match status" value="1"/>
</dbReference>
<dbReference type="Gene3D" id="3.90.190.10">
    <property type="entry name" value="Protein tyrosine phosphatase superfamily"/>
    <property type="match status" value="1"/>
</dbReference>
<dbReference type="InterPro" id="IPR029021">
    <property type="entry name" value="Prot-tyrosine_phosphatase-like"/>
</dbReference>
<dbReference type="InterPro" id="IPR050561">
    <property type="entry name" value="PTP"/>
</dbReference>
<dbReference type="InterPro" id="IPR003595">
    <property type="entry name" value="Tyr_Pase_cat"/>
</dbReference>
<dbReference type="InterPro" id="IPR000387">
    <property type="entry name" value="Tyr_Pase_dom"/>
</dbReference>
<dbReference type="InterPro" id="IPR020422">
    <property type="entry name" value="TYR_PHOSPHATASE_DUAL_dom"/>
</dbReference>
<dbReference type="PANTHER" id="PTHR23339">
    <property type="entry name" value="TYROSINE SPECIFIC PROTEIN PHOSPHATASE AND DUAL SPECIFICITY PROTEIN PHOSPHATASE"/>
    <property type="match status" value="1"/>
</dbReference>
<dbReference type="Pfam" id="PF22785">
    <property type="entry name" value="Tc-R-P"/>
    <property type="match status" value="1"/>
</dbReference>
<dbReference type="SMART" id="SM00404">
    <property type="entry name" value="PTPc_motif"/>
    <property type="match status" value="1"/>
</dbReference>
<dbReference type="SUPFAM" id="SSF52799">
    <property type="entry name" value="(Phosphotyrosine protein) phosphatases II"/>
    <property type="match status" value="1"/>
</dbReference>
<dbReference type="PROSITE" id="PS50056">
    <property type="entry name" value="TYR_PHOSPHATASE_2"/>
    <property type="match status" value="1"/>
</dbReference>
<dbReference type="PROSITE" id="PS50054">
    <property type="entry name" value="TYR_PHOSPHATASE_DUAL"/>
    <property type="match status" value="1"/>
</dbReference>
<name>TP4A1_MOUSE</name>
<keyword id="KW-0002">3D-structure</keyword>
<keyword id="KW-0131">Cell cycle</keyword>
<keyword id="KW-1003">Cell membrane</keyword>
<keyword id="KW-0963">Cytoplasm</keyword>
<keyword id="KW-0206">Cytoskeleton</keyword>
<keyword id="KW-0217">Developmental protein</keyword>
<keyword id="KW-1015">Disulfide bond</keyword>
<keyword id="KW-0256">Endoplasmic reticulum</keyword>
<keyword id="KW-0967">Endosome</keyword>
<keyword id="KW-0378">Hydrolase</keyword>
<keyword id="KW-0449">Lipoprotein</keyword>
<keyword id="KW-0472">Membrane</keyword>
<keyword id="KW-0488">Methylation</keyword>
<keyword id="KW-0539">Nucleus</keyword>
<keyword id="KW-0636">Prenylation</keyword>
<keyword id="KW-0904">Protein phosphatase</keyword>
<keyword id="KW-1185">Reference proteome</keyword>
<gene>
    <name type="primary">Ptp4a1</name>
    <name type="synonym">Prl1</name>
</gene>